<gene>
    <name evidence="1" type="primary">ruvA</name>
    <name type="ordered locus">PFL_4764</name>
</gene>
<name>RUVA_PSEF5</name>
<proteinExistence type="inferred from homology"/>
<keyword id="KW-0963">Cytoplasm</keyword>
<keyword id="KW-0227">DNA damage</keyword>
<keyword id="KW-0233">DNA recombination</keyword>
<keyword id="KW-0234">DNA repair</keyword>
<keyword id="KW-0238">DNA-binding</keyword>
<evidence type="ECO:0000255" key="1">
    <source>
        <dbReference type="HAMAP-Rule" id="MF_00031"/>
    </source>
</evidence>
<feature type="chain" id="PRO_0000224894" description="Holliday junction branch migration complex subunit RuvA">
    <location>
        <begin position="1"/>
        <end position="202"/>
    </location>
</feature>
<feature type="region of interest" description="Domain I" evidence="1">
    <location>
        <begin position="1"/>
        <end position="64"/>
    </location>
</feature>
<feature type="region of interest" description="Domain II" evidence="1">
    <location>
        <begin position="65"/>
        <end position="143"/>
    </location>
</feature>
<feature type="region of interest" description="Flexible linker" evidence="1">
    <location>
        <begin position="144"/>
        <end position="154"/>
    </location>
</feature>
<feature type="region of interest" description="Domain III" evidence="1">
    <location>
        <begin position="154"/>
        <end position="202"/>
    </location>
</feature>
<accession>Q4K7D8</accession>
<reference key="1">
    <citation type="journal article" date="2005" name="Nat. Biotechnol.">
        <title>Complete genome sequence of the plant commensal Pseudomonas fluorescens Pf-5.</title>
        <authorList>
            <person name="Paulsen I.T."/>
            <person name="Press C.M."/>
            <person name="Ravel J."/>
            <person name="Kobayashi D.Y."/>
            <person name="Myers G.S.A."/>
            <person name="Mavrodi D.V."/>
            <person name="DeBoy R.T."/>
            <person name="Seshadri R."/>
            <person name="Ren Q."/>
            <person name="Madupu R."/>
            <person name="Dodson R.J."/>
            <person name="Durkin A.S."/>
            <person name="Brinkac L.M."/>
            <person name="Daugherty S.C."/>
            <person name="Sullivan S.A."/>
            <person name="Rosovitz M.J."/>
            <person name="Gwinn M.L."/>
            <person name="Zhou L."/>
            <person name="Schneider D.J."/>
            <person name="Cartinhour S.W."/>
            <person name="Nelson W.C."/>
            <person name="Weidman J."/>
            <person name="Watkins K."/>
            <person name="Tran K."/>
            <person name="Khouri H."/>
            <person name="Pierson E.A."/>
            <person name="Pierson L.S. III"/>
            <person name="Thomashow L.S."/>
            <person name="Loper J.E."/>
        </authorList>
    </citation>
    <scope>NUCLEOTIDE SEQUENCE [LARGE SCALE GENOMIC DNA]</scope>
    <source>
        <strain>ATCC BAA-477 / NRRL B-23932 / Pf-5</strain>
    </source>
</reference>
<dbReference type="EMBL" id="CP000076">
    <property type="protein sequence ID" value="AAY93994.1"/>
    <property type="molecule type" value="Genomic_DNA"/>
</dbReference>
<dbReference type="RefSeq" id="WP_011063019.1">
    <property type="nucleotide sequence ID" value="NC_004129.6"/>
</dbReference>
<dbReference type="SMR" id="Q4K7D8"/>
<dbReference type="STRING" id="220664.PFL_4764"/>
<dbReference type="GeneID" id="57477744"/>
<dbReference type="KEGG" id="pfl:PFL_4764"/>
<dbReference type="PATRIC" id="fig|220664.5.peg.4874"/>
<dbReference type="eggNOG" id="COG0632">
    <property type="taxonomic scope" value="Bacteria"/>
</dbReference>
<dbReference type="HOGENOM" id="CLU_087936_0_0_6"/>
<dbReference type="Proteomes" id="UP000008540">
    <property type="component" value="Chromosome"/>
</dbReference>
<dbReference type="GO" id="GO:0005737">
    <property type="term" value="C:cytoplasm"/>
    <property type="evidence" value="ECO:0007669"/>
    <property type="project" value="UniProtKB-SubCell"/>
</dbReference>
<dbReference type="GO" id="GO:0009379">
    <property type="term" value="C:Holliday junction helicase complex"/>
    <property type="evidence" value="ECO:0007669"/>
    <property type="project" value="InterPro"/>
</dbReference>
<dbReference type="GO" id="GO:0048476">
    <property type="term" value="C:Holliday junction resolvase complex"/>
    <property type="evidence" value="ECO:0007669"/>
    <property type="project" value="UniProtKB-UniRule"/>
</dbReference>
<dbReference type="GO" id="GO:0005524">
    <property type="term" value="F:ATP binding"/>
    <property type="evidence" value="ECO:0007669"/>
    <property type="project" value="InterPro"/>
</dbReference>
<dbReference type="GO" id="GO:0000400">
    <property type="term" value="F:four-way junction DNA binding"/>
    <property type="evidence" value="ECO:0007669"/>
    <property type="project" value="UniProtKB-UniRule"/>
</dbReference>
<dbReference type="GO" id="GO:0009378">
    <property type="term" value="F:four-way junction helicase activity"/>
    <property type="evidence" value="ECO:0007669"/>
    <property type="project" value="InterPro"/>
</dbReference>
<dbReference type="GO" id="GO:0006310">
    <property type="term" value="P:DNA recombination"/>
    <property type="evidence" value="ECO:0007669"/>
    <property type="project" value="UniProtKB-UniRule"/>
</dbReference>
<dbReference type="GO" id="GO:0006281">
    <property type="term" value="P:DNA repair"/>
    <property type="evidence" value="ECO:0007669"/>
    <property type="project" value="UniProtKB-UniRule"/>
</dbReference>
<dbReference type="CDD" id="cd14332">
    <property type="entry name" value="UBA_RuvA_C"/>
    <property type="match status" value="1"/>
</dbReference>
<dbReference type="Gene3D" id="1.10.150.20">
    <property type="entry name" value="5' to 3' exonuclease, C-terminal subdomain"/>
    <property type="match status" value="1"/>
</dbReference>
<dbReference type="Gene3D" id="1.10.8.10">
    <property type="entry name" value="DNA helicase RuvA subunit, C-terminal domain"/>
    <property type="match status" value="1"/>
</dbReference>
<dbReference type="Gene3D" id="2.40.50.140">
    <property type="entry name" value="Nucleic acid-binding proteins"/>
    <property type="match status" value="1"/>
</dbReference>
<dbReference type="HAMAP" id="MF_00031">
    <property type="entry name" value="DNA_HJ_migration_RuvA"/>
    <property type="match status" value="1"/>
</dbReference>
<dbReference type="InterPro" id="IPR013849">
    <property type="entry name" value="DNA_helicase_Holl-junc_RuvA_I"/>
</dbReference>
<dbReference type="InterPro" id="IPR003583">
    <property type="entry name" value="Hlx-hairpin-Hlx_DNA-bd_motif"/>
</dbReference>
<dbReference type="InterPro" id="IPR012340">
    <property type="entry name" value="NA-bd_OB-fold"/>
</dbReference>
<dbReference type="InterPro" id="IPR000085">
    <property type="entry name" value="RuvA"/>
</dbReference>
<dbReference type="InterPro" id="IPR010994">
    <property type="entry name" value="RuvA_2-like"/>
</dbReference>
<dbReference type="InterPro" id="IPR011114">
    <property type="entry name" value="RuvA_C"/>
</dbReference>
<dbReference type="InterPro" id="IPR036267">
    <property type="entry name" value="RuvA_C_sf"/>
</dbReference>
<dbReference type="NCBIfam" id="TIGR00084">
    <property type="entry name" value="ruvA"/>
    <property type="match status" value="1"/>
</dbReference>
<dbReference type="Pfam" id="PF14520">
    <property type="entry name" value="HHH_5"/>
    <property type="match status" value="1"/>
</dbReference>
<dbReference type="Pfam" id="PF07499">
    <property type="entry name" value="RuvA_C"/>
    <property type="match status" value="1"/>
</dbReference>
<dbReference type="Pfam" id="PF01330">
    <property type="entry name" value="RuvA_N"/>
    <property type="match status" value="1"/>
</dbReference>
<dbReference type="SMART" id="SM00278">
    <property type="entry name" value="HhH1"/>
    <property type="match status" value="2"/>
</dbReference>
<dbReference type="SUPFAM" id="SSF46929">
    <property type="entry name" value="DNA helicase RuvA subunit, C-terminal domain"/>
    <property type="match status" value="1"/>
</dbReference>
<dbReference type="SUPFAM" id="SSF50249">
    <property type="entry name" value="Nucleic acid-binding proteins"/>
    <property type="match status" value="1"/>
</dbReference>
<dbReference type="SUPFAM" id="SSF47781">
    <property type="entry name" value="RuvA domain 2-like"/>
    <property type="match status" value="1"/>
</dbReference>
<sequence>MIGRLRGTLAEKQPPHLILDVNGLGYEVEVPMTTLYRLPSVGEPLTLHTHLVVREDAQLLYGFASKRERDFFRELIRLNGVGPKLALALMSSLEVDELVRCVQAQDTSALTKVPGVGKKTAERLLVELKDRFKAWEAVPSMFALVPNQPDAPAPVASAESDAVSALISLGYKPQEASKAVSAIKDKGLSSEDMIRRALKGMI</sequence>
<protein>
    <recommendedName>
        <fullName evidence="1">Holliday junction branch migration complex subunit RuvA</fullName>
    </recommendedName>
</protein>
<comment type="function">
    <text evidence="1">The RuvA-RuvB-RuvC complex processes Holliday junction (HJ) DNA during genetic recombination and DNA repair, while the RuvA-RuvB complex plays an important role in the rescue of blocked DNA replication forks via replication fork reversal (RFR). RuvA specifically binds to HJ cruciform DNA, conferring on it an open structure. The RuvB hexamer acts as an ATP-dependent pump, pulling dsDNA into and through the RuvAB complex. HJ branch migration allows RuvC to scan DNA until it finds its consensus sequence, where it cleaves and resolves the cruciform DNA.</text>
</comment>
<comment type="subunit">
    <text evidence="1">Homotetramer. Forms an RuvA(8)-RuvB(12)-Holliday junction (HJ) complex. HJ DNA is sandwiched between 2 RuvA tetramers; dsDNA enters through RuvA and exits via RuvB. An RuvB hexamer assembles on each DNA strand where it exits the tetramer. Each RuvB hexamer is contacted by two RuvA subunits (via domain III) on 2 adjacent RuvB subunits; this complex drives branch migration. In the full resolvosome a probable DNA-RuvA(4)-RuvB(12)-RuvC(2) complex forms which resolves the HJ.</text>
</comment>
<comment type="subcellular location">
    <subcellularLocation>
        <location evidence="1">Cytoplasm</location>
    </subcellularLocation>
</comment>
<comment type="domain">
    <text evidence="1">Has three domains with a flexible linker between the domains II and III and assumes an 'L' shape. Domain III is highly mobile and contacts RuvB.</text>
</comment>
<comment type="similarity">
    <text evidence="1">Belongs to the RuvA family.</text>
</comment>
<organism>
    <name type="scientific">Pseudomonas fluorescens (strain ATCC BAA-477 / NRRL B-23932 / Pf-5)</name>
    <dbReference type="NCBI Taxonomy" id="220664"/>
    <lineage>
        <taxon>Bacteria</taxon>
        <taxon>Pseudomonadati</taxon>
        <taxon>Pseudomonadota</taxon>
        <taxon>Gammaproteobacteria</taxon>
        <taxon>Pseudomonadales</taxon>
        <taxon>Pseudomonadaceae</taxon>
        <taxon>Pseudomonas</taxon>
    </lineage>
</organism>